<organism>
    <name type="scientific">Aedes aegypti</name>
    <name type="common">Yellowfever mosquito</name>
    <name type="synonym">Culex aegypti</name>
    <dbReference type="NCBI Taxonomy" id="7159"/>
    <lineage>
        <taxon>Eukaryota</taxon>
        <taxon>Metazoa</taxon>
        <taxon>Ecdysozoa</taxon>
        <taxon>Arthropoda</taxon>
        <taxon>Hexapoda</taxon>
        <taxon>Insecta</taxon>
        <taxon>Pterygota</taxon>
        <taxon>Neoptera</taxon>
        <taxon>Endopterygota</taxon>
        <taxon>Diptera</taxon>
        <taxon>Nematocera</taxon>
        <taxon>Culicoidea</taxon>
        <taxon>Culicidae</taxon>
        <taxon>Culicinae</taxon>
        <taxon>Aedini</taxon>
        <taxon>Aedes</taxon>
        <taxon>Stegomyia</taxon>
    </lineage>
</organism>
<name>TRET1_AEDAE</name>
<comment type="function">
    <text evidence="1">High-capacity facilitative transporter for trehalose. Does not transport maltose, sucrose or lactose. Mediates the bidirectional transfer of trehalose. Responsible for the transport of trehalose synthesized in the fat body and the incorporation of trehalose into other tissues that require a carbon source, thereby regulating trehalose levels in the hemolymph (By similarity).</text>
</comment>
<comment type="subcellular location">
    <subcellularLocation>
        <location evidence="1 2">Cell membrane</location>
        <topology evidence="1 2">Multi-pass membrane protein</topology>
    </subcellularLocation>
</comment>
<comment type="similarity">
    <text evidence="1 2">Belongs to the major facilitator superfamily. Sugar transporter (TC 2.A.1.1) family. Trehalose transporter subfamily.</text>
</comment>
<sequence length="806" mass="89257">MFGNEMDDTRDPLQYGYQRVNTGEGSLSTSTTGTSLDTIVLDTNAEDLNSTPRVGAQRTFSPILETDDTNPFLDPPPPGQKSPPAVGEAKAKSKSSLKGSRVSFDQEDRFDETDEGFRKQREHFQKHKSHSTSEHKNQLIKELRHLLAADNRRQFQGKKHVSLDVQSSKVLEELLKASSSEDDFEGQRKQFQERKHKSLDARHISFKFEKEPTPSSSEEDFEPSTSLLKIDADITKPVIIDLKVNRAQSDQALTQFQKNLAHFQDLESSEDEDYISSRKHFQQAKSMSTDSRKSNKSIRFFEMEMGTKEENIRTAVPFVRQITEDGKPKLEVYRPTTNPIFIWTQVLAALSVSLGSMVVGFSSAYTSPALVSMKDRNITSFEVTDQSGSWVGGIMPLAGLAGGILGGPLIEYLGRKNTILATATPFIISWLLIACATHVAMVLVGRALSGFSVGVASLSLPVYLGETVQPEVRGTLGLLPTAFGNIGILLCFVAGKYMDWSGLAFLGAALPIPFLLLMFLIPETPRWYVSRGRDDRARKALQWLRGKKADVDPELKGIIKSHQDAERHASQSAMLDLMKKANLKPLLISLGLMFFQQLSGINAVIFYTVQIFQDAGSTIDENLCTIIVGVVNFIATFIATMLIDRLGRKMLLYISDVAMIITLMTLGGFFYVKNSGQDVSQVGWLPLAAFVIYVLGFSLGFGPIPWLMMGEILPGKIRGSAASVATAFNWSCTFIVTKTFADIINAIGTHGTFWMFGSICVIGLAFVIFYVPETQGKSLEDIERKMMGRVRRMSSVANIKPLSFNM</sequence>
<feature type="chain" id="PRO_0000395537" description="Facilitated trehalose transporter Tret1">
    <location>
        <begin position="1"/>
        <end position="806"/>
    </location>
</feature>
<feature type="topological domain" description="Cytoplasmic" evidence="2">
    <location>
        <begin position="1"/>
        <end position="339"/>
    </location>
</feature>
<feature type="transmembrane region" description="Helical; Name=1" evidence="2">
    <location>
        <begin position="340"/>
        <end position="360"/>
    </location>
</feature>
<feature type="topological domain" description="Extracellular" evidence="2">
    <location>
        <begin position="361"/>
        <end position="389"/>
    </location>
</feature>
<feature type="transmembrane region" description="Helical; Name=2" evidence="2">
    <location>
        <begin position="390"/>
        <end position="410"/>
    </location>
</feature>
<feature type="topological domain" description="Cytoplasmic" evidence="2">
    <location>
        <begin position="411"/>
        <end position="424"/>
    </location>
</feature>
<feature type="transmembrane region" description="Helical; Name=3" evidence="2">
    <location>
        <begin position="425"/>
        <end position="445"/>
    </location>
</feature>
<feature type="topological domain" description="Extracellular" evidence="2">
    <location>
        <begin position="446"/>
        <end position="447"/>
    </location>
</feature>
<feature type="transmembrane region" description="Helical; Name=4" evidence="2">
    <location>
        <begin position="448"/>
        <end position="468"/>
    </location>
</feature>
<feature type="topological domain" description="Cytoplasmic" evidence="2">
    <location>
        <begin position="469"/>
        <end position="473"/>
    </location>
</feature>
<feature type="transmembrane region" description="Helical; Name=5" evidence="2">
    <location>
        <begin position="474"/>
        <end position="494"/>
    </location>
</feature>
<feature type="topological domain" description="Extracellular" evidence="2">
    <location>
        <begin position="495"/>
        <end position="501"/>
    </location>
</feature>
<feature type="transmembrane region" description="Helical; Name=6" evidence="2">
    <location>
        <begin position="502"/>
        <end position="522"/>
    </location>
</feature>
<feature type="topological domain" description="Cytoplasmic" evidence="2">
    <location>
        <begin position="523"/>
        <end position="585"/>
    </location>
</feature>
<feature type="transmembrane region" description="Helical; Name=7" evidence="2">
    <location>
        <begin position="586"/>
        <end position="606"/>
    </location>
</feature>
<feature type="topological domain" description="Extracellular" evidence="2">
    <location>
        <begin position="607"/>
        <end position="622"/>
    </location>
</feature>
<feature type="transmembrane region" description="Helical; Name=8" evidence="2">
    <location>
        <begin position="623"/>
        <end position="643"/>
    </location>
</feature>
<feature type="topological domain" description="Cytoplasmic" evidence="2">
    <location>
        <begin position="644"/>
        <end position="649"/>
    </location>
</feature>
<feature type="transmembrane region" description="Helical; Name=9" evidence="2">
    <location>
        <begin position="650"/>
        <end position="670"/>
    </location>
</feature>
<feature type="topological domain" description="Extracellular" evidence="2">
    <location>
        <begin position="671"/>
        <end position="681"/>
    </location>
</feature>
<feature type="transmembrane region" description="Helical; Name=10" evidence="2">
    <location>
        <begin position="682"/>
        <end position="702"/>
    </location>
</feature>
<feature type="topological domain" description="Cytoplasmic" evidence="2">
    <location>
        <begin position="703"/>
        <end position="723"/>
    </location>
</feature>
<feature type="transmembrane region" description="Helical; Name=11" evidence="2">
    <location>
        <begin position="724"/>
        <end position="744"/>
    </location>
</feature>
<feature type="topological domain" description="Extracellular" evidence="2">
    <location>
        <begin position="745"/>
        <end position="750"/>
    </location>
</feature>
<feature type="transmembrane region" description="Helical; Name=12" evidence="2">
    <location>
        <begin position="751"/>
        <end position="771"/>
    </location>
</feature>
<feature type="topological domain" description="Cytoplasmic" evidence="2">
    <location>
        <begin position="772"/>
        <end position="806"/>
    </location>
</feature>
<feature type="region of interest" description="Disordered" evidence="3">
    <location>
        <begin position="1"/>
        <end position="34"/>
    </location>
</feature>
<feature type="region of interest" description="Disordered" evidence="3">
    <location>
        <begin position="48"/>
        <end position="138"/>
    </location>
</feature>
<feature type="compositionally biased region" description="Low complexity" evidence="3">
    <location>
        <begin position="25"/>
        <end position="34"/>
    </location>
</feature>
<feature type="glycosylation site" description="N-linked (GlcNAc...) asparagine" evidence="2">
    <location>
        <position position="377"/>
    </location>
</feature>
<protein>
    <recommendedName>
        <fullName evidence="1">Facilitated trehalose transporter Tret1</fullName>
    </recommendedName>
</protein>
<keyword id="KW-1003">Cell membrane</keyword>
<keyword id="KW-0325">Glycoprotein</keyword>
<keyword id="KW-0472">Membrane</keyword>
<keyword id="KW-1185">Reference proteome</keyword>
<keyword id="KW-0762">Sugar transport</keyword>
<keyword id="KW-0812">Transmembrane</keyword>
<keyword id="KW-1133">Transmembrane helix</keyword>
<keyword id="KW-0813">Transport</keyword>
<proteinExistence type="inferred from homology"/>
<evidence type="ECO:0000250" key="1">
    <source>
        <dbReference type="UniProtKB" id="Q7PIR5"/>
    </source>
</evidence>
<evidence type="ECO:0000255" key="2"/>
<evidence type="ECO:0000256" key="3">
    <source>
        <dbReference type="SAM" id="MobiDB-lite"/>
    </source>
</evidence>
<evidence type="ECO:0000312" key="4">
    <source>
        <dbReference type="EMBL" id="EAT48366.1"/>
    </source>
</evidence>
<reference evidence="4" key="1">
    <citation type="journal article" date="2007" name="Science">
        <title>Genome sequence of Aedes aegypti, a major arbovirus vector.</title>
        <authorList>
            <person name="Nene V."/>
            <person name="Wortman J.R."/>
            <person name="Lawson D."/>
            <person name="Haas B.J."/>
            <person name="Kodira C.D."/>
            <person name="Tu Z.J."/>
            <person name="Loftus B.J."/>
            <person name="Xi Z."/>
            <person name="Megy K."/>
            <person name="Grabherr M."/>
            <person name="Ren Q."/>
            <person name="Zdobnov E.M."/>
            <person name="Lobo N.F."/>
            <person name="Campbell K.S."/>
            <person name="Brown S.E."/>
            <person name="Bonaldo M.F."/>
            <person name="Zhu J."/>
            <person name="Sinkins S.P."/>
            <person name="Hogenkamp D.G."/>
            <person name="Amedeo P."/>
            <person name="Arensburger P."/>
            <person name="Atkinson P.W."/>
            <person name="Bidwell S.L."/>
            <person name="Biedler J."/>
            <person name="Birney E."/>
            <person name="Bruggner R.V."/>
            <person name="Costas J."/>
            <person name="Coy M.R."/>
            <person name="Crabtree J."/>
            <person name="Crawford M."/>
            <person name="DeBruyn B."/>
            <person name="DeCaprio D."/>
            <person name="Eiglmeier K."/>
            <person name="Eisenstadt E."/>
            <person name="El-Dorry H."/>
            <person name="Gelbart W.M."/>
            <person name="Gomes S.L."/>
            <person name="Hammond M."/>
            <person name="Hannick L.I."/>
            <person name="Hogan J.R."/>
            <person name="Holmes M.H."/>
            <person name="Jaffe D."/>
            <person name="Johnston S.J."/>
            <person name="Kennedy R.C."/>
            <person name="Koo H."/>
            <person name="Kravitz S."/>
            <person name="Kriventseva E.V."/>
            <person name="Kulp D."/>
            <person name="Labutti K."/>
            <person name="Lee E."/>
            <person name="Li S."/>
            <person name="Lovin D.D."/>
            <person name="Mao C."/>
            <person name="Mauceli E."/>
            <person name="Menck C.F."/>
            <person name="Miller J.R."/>
            <person name="Montgomery P."/>
            <person name="Mori A."/>
            <person name="Nascimento A.L."/>
            <person name="Naveira H.F."/>
            <person name="Nusbaum C."/>
            <person name="O'Leary S.B."/>
            <person name="Orvis J."/>
            <person name="Pertea M."/>
            <person name="Quesneville H."/>
            <person name="Reidenbach K.R."/>
            <person name="Rogers Y.-H.C."/>
            <person name="Roth C.W."/>
            <person name="Schneider J.R."/>
            <person name="Schatz M."/>
            <person name="Shumway M."/>
            <person name="Stanke M."/>
            <person name="Stinson E.O."/>
            <person name="Tubio J.M.C."/>
            <person name="Vanzee J.P."/>
            <person name="Verjovski-Almeida S."/>
            <person name="Werner D."/>
            <person name="White O.R."/>
            <person name="Wyder S."/>
            <person name="Zeng Q."/>
            <person name="Zhao Q."/>
            <person name="Zhao Y."/>
            <person name="Hill C.A."/>
            <person name="Raikhel A.S."/>
            <person name="Soares M.B."/>
            <person name="Knudson D.L."/>
            <person name="Lee N.H."/>
            <person name="Galagan J."/>
            <person name="Salzberg S.L."/>
            <person name="Paulsen I.T."/>
            <person name="Dimopoulos G."/>
            <person name="Collins F.H."/>
            <person name="Bruce B."/>
            <person name="Fraser-Liggett C.M."/>
            <person name="Severson D.W."/>
        </authorList>
    </citation>
    <scope>NUCLEOTIDE SEQUENCE [LARGE SCALE GENOMIC DNA]</scope>
    <source>
        <strain>LVPib12</strain>
    </source>
</reference>
<accession>Q17NV8</accession>
<gene>
    <name evidence="1" type="primary">Tret1</name>
    <name type="ORF">AAEL000567</name>
</gene>
<dbReference type="EMBL" id="CH477196">
    <property type="protein sequence ID" value="EAT48366.1"/>
    <property type="molecule type" value="Genomic_DNA"/>
</dbReference>
<dbReference type="RefSeq" id="XP_001648649.1">
    <property type="nucleotide sequence ID" value="XM_001648599.1"/>
</dbReference>
<dbReference type="SMR" id="Q17NV8"/>
<dbReference type="FunCoup" id="Q17NV8">
    <property type="interactions" value="170"/>
</dbReference>
<dbReference type="STRING" id="7159.Q17NV8"/>
<dbReference type="GlyCosmos" id="Q17NV8">
    <property type="glycosylation" value="1 site, No reported glycans"/>
</dbReference>
<dbReference type="PaxDb" id="7159-AAEL000567-PA"/>
<dbReference type="VEuPathDB" id="VectorBase:AAEL014972"/>
<dbReference type="eggNOG" id="KOG0254">
    <property type="taxonomic scope" value="Eukaryota"/>
</dbReference>
<dbReference type="HOGENOM" id="CLU_016710_0_0_1"/>
<dbReference type="InParanoid" id="Q17NV8"/>
<dbReference type="OMA" id="IFIWTQS"/>
<dbReference type="PhylomeDB" id="Q17NV8"/>
<dbReference type="Proteomes" id="UP000008820">
    <property type="component" value="Unassembled WGS sequence"/>
</dbReference>
<dbReference type="Proteomes" id="UP000682892">
    <property type="component" value="Chromosome 1"/>
</dbReference>
<dbReference type="GO" id="GO:0005886">
    <property type="term" value="C:plasma membrane"/>
    <property type="evidence" value="ECO:0000250"/>
    <property type="project" value="UniProtKB"/>
</dbReference>
<dbReference type="GO" id="GO:0051119">
    <property type="term" value="F:sugar transmembrane transporter activity"/>
    <property type="evidence" value="ECO:0007669"/>
    <property type="project" value="InterPro"/>
</dbReference>
<dbReference type="GO" id="GO:0015574">
    <property type="term" value="F:trehalose transmembrane transporter activity"/>
    <property type="evidence" value="ECO:0000250"/>
    <property type="project" value="UniProtKB"/>
</dbReference>
<dbReference type="GO" id="GO:0015771">
    <property type="term" value="P:trehalose transport"/>
    <property type="evidence" value="ECO:0000250"/>
    <property type="project" value="UniProtKB"/>
</dbReference>
<dbReference type="CDD" id="cd17358">
    <property type="entry name" value="MFS_GLUT6_8_Class3_like"/>
    <property type="match status" value="1"/>
</dbReference>
<dbReference type="FunFam" id="1.20.1250.20:FF:000055">
    <property type="entry name" value="Facilitated trehalose transporter Tret1-2 homolog"/>
    <property type="match status" value="1"/>
</dbReference>
<dbReference type="Gene3D" id="1.20.1250.20">
    <property type="entry name" value="MFS general substrate transporter like domains"/>
    <property type="match status" value="1"/>
</dbReference>
<dbReference type="InterPro" id="IPR020846">
    <property type="entry name" value="MFS_dom"/>
</dbReference>
<dbReference type="InterPro" id="IPR044775">
    <property type="entry name" value="MFS_ERD6/Tret1-like"/>
</dbReference>
<dbReference type="InterPro" id="IPR005828">
    <property type="entry name" value="MFS_sugar_transport-like"/>
</dbReference>
<dbReference type="InterPro" id="IPR036259">
    <property type="entry name" value="MFS_trans_sf"/>
</dbReference>
<dbReference type="InterPro" id="IPR050549">
    <property type="entry name" value="MFS_Trehalose_Transporter"/>
</dbReference>
<dbReference type="InterPro" id="IPR003663">
    <property type="entry name" value="Sugar/inositol_transpt"/>
</dbReference>
<dbReference type="InterPro" id="IPR005829">
    <property type="entry name" value="Sugar_transporter_CS"/>
</dbReference>
<dbReference type="NCBIfam" id="TIGR00879">
    <property type="entry name" value="SP"/>
    <property type="match status" value="1"/>
</dbReference>
<dbReference type="PANTHER" id="PTHR48021">
    <property type="match status" value="1"/>
</dbReference>
<dbReference type="PANTHER" id="PTHR48021:SF96">
    <property type="entry name" value="FACILITATED TREHALOSE TRANSPORTER TRET1-1-RELATED"/>
    <property type="match status" value="1"/>
</dbReference>
<dbReference type="Pfam" id="PF00083">
    <property type="entry name" value="Sugar_tr"/>
    <property type="match status" value="1"/>
</dbReference>
<dbReference type="PRINTS" id="PR00171">
    <property type="entry name" value="SUGRTRNSPORT"/>
</dbReference>
<dbReference type="SUPFAM" id="SSF103473">
    <property type="entry name" value="MFS general substrate transporter"/>
    <property type="match status" value="1"/>
</dbReference>
<dbReference type="PROSITE" id="PS50850">
    <property type="entry name" value="MFS"/>
    <property type="match status" value="1"/>
</dbReference>
<dbReference type="PROSITE" id="PS00216">
    <property type="entry name" value="SUGAR_TRANSPORT_1"/>
    <property type="match status" value="1"/>
</dbReference>
<dbReference type="PROSITE" id="PS00217">
    <property type="entry name" value="SUGAR_TRANSPORT_2"/>
    <property type="match status" value="1"/>
</dbReference>